<sequence length="204" mass="24146">MGAYKYIQELWRKKQSDVMRFLLRVRCWQYRQLSALHRAPRPTRPDKARRLGYKAKQGYVIYRIRVRRGGRKRPVPKGATYGKPVHHGVNQLKFARSLQSVAEERAGRHCGALRVLNSYWVGEDSTYKFFEVILIDPFHKAIRRNPDTQWITKPVHKHREMRGLTSAGRKSRGLGKGHKFHHTIGGSRRAAWRRRNTLQLHRYR</sequence>
<gene>
    <name type="primary">RPL15</name>
</gene>
<protein>
    <recommendedName>
        <fullName evidence="4">Large ribosomal subunit protein eL15</fullName>
    </recommendedName>
    <alternativeName>
        <fullName>60S ribosomal protein L15</fullName>
    </alternativeName>
</protein>
<reference key="1">
    <citation type="journal article" date="2005" name="BMC Genomics">
        <title>Characterization of 954 bovine full-CDS cDNA sequences.</title>
        <authorList>
            <person name="Harhay G.P."/>
            <person name="Sonstegard T.S."/>
            <person name="Keele J.W."/>
            <person name="Heaton M.P."/>
            <person name="Clawson M.L."/>
            <person name="Snelling W.M."/>
            <person name="Wiedmann R.T."/>
            <person name="Van Tassell C.P."/>
            <person name="Smith T.P.L."/>
        </authorList>
    </citation>
    <scope>NUCLEOTIDE SEQUENCE [LARGE SCALE MRNA]</scope>
</reference>
<reference key="2">
    <citation type="submission" date="2005-08" db="EMBL/GenBank/DDBJ databases">
        <authorList>
            <consortium name="NIH - Mammalian Gene Collection (MGC) project"/>
        </authorList>
    </citation>
    <scope>NUCLEOTIDE SEQUENCE [LARGE SCALE MRNA]</scope>
    <source>
        <strain>Crossbred X Angus</strain>
        <tissue>Ileum</tissue>
    </source>
</reference>
<accession>Q5EAD6</accession>
<accession>Q5EA63</accession>
<evidence type="ECO:0000250" key="1">
    <source>
        <dbReference type="UniProtKB" id="P61313"/>
    </source>
</evidence>
<evidence type="ECO:0000250" key="2">
    <source>
        <dbReference type="UniProtKB" id="P61314"/>
    </source>
</evidence>
<evidence type="ECO:0000256" key="3">
    <source>
        <dbReference type="SAM" id="MobiDB-lite"/>
    </source>
</evidence>
<evidence type="ECO:0000305" key="4"/>
<dbReference type="EMBL" id="BT020633">
    <property type="protein sequence ID" value="AAX08650.1"/>
    <property type="molecule type" value="mRNA"/>
</dbReference>
<dbReference type="EMBL" id="BT020706">
    <property type="protein sequence ID" value="AAX08723.1"/>
    <property type="molecule type" value="mRNA"/>
</dbReference>
<dbReference type="EMBL" id="BC102404">
    <property type="protein sequence ID" value="AAI02405.1"/>
    <property type="molecule type" value="mRNA"/>
</dbReference>
<dbReference type="RefSeq" id="NP_001071334.1">
    <property type="nucleotide sequence ID" value="NM_001077866.2"/>
</dbReference>
<dbReference type="RefSeq" id="XP_005226233.1">
    <property type="nucleotide sequence ID" value="XM_005226176.3"/>
</dbReference>
<dbReference type="SMR" id="Q5EAD6"/>
<dbReference type="FunCoup" id="Q5EAD6">
    <property type="interactions" value="3444"/>
</dbReference>
<dbReference type="STRING" id="9913.ENSBTAP00000044213"/>
<dbReference type="PaxDb" id="9913-ENSBTAP00000044213"/>
<dbReference type="PeptideAtlas" id="Q5EAD6"/>
<dbReference type="Ensembl" id="ENSBTAT00000020729.5">
    <property type="protein sequence ID" value="ENSBTAP00000044213.2"/>
    <property type="gene ID" value="ENSBTAG00000033080.3"/>
</dbReference>
<dbReference type="GeneID" id="507151"/>
<dbReference type="KEGG" id="bta:507151"/>
<dbReference type="CTD" id="6138"/>
<dbReference type="VEuPathDB" id="HostDB:ENSBTAG00000033080"/>
<dbReference type="eggNOG" id="KOG1678">
    <property type="taxonomic scope" value="Eukaryota"/>
</dbReference>
<dbReference type="GeneTree" id="ENSGT00910000144184"/>
<dbReference type="HOGENOM" id="CLU_080796_0_0_1"/>
<dbReference type="InParanoid" id="Q5EAD6"/>
<dbReference type="OMA" id="YIRDAWK"/>
<dbReference type="OrthoDB" id="10255148at2759"/>
<dbReference type="TreeFam" id="TF300050"/>
<dbReference type="Reactome" id="R-BTA-156827">
    <property type="pathway name" value="L13a-mediated translational silencing of Ceruloplasmin expression"/>
</dbReference>
<dbReference type="Reactome" id="R-BTA-1799339">
    <property type="pathway name" value="SRP-dependent cotranslational protein targeting to membrane"/>
</dbReference>
<dbReference type="Reactome" id="R-BTA-6791226">
    <property type="pathway name" value="Major pathway of rRNA processing in the nucleolus and cytosol"/>
</dbReference>
<dbReference type="Reactome" id="R-BTA-72689">
    <property type="pathway name" value="Formation of a pool of free 40S subunits"/>
</dbReference>
<dbReference type="Reactome" id="R-BTA-72706">
    <property type="pathway name" value="GTP hydrolysis and joining of the 60S ribosomal subunit"/>
</dbReference>
<dbReference type="Reactome" id="R-BTA-975956">
    <property type="pathway name" value="Nonsense Mediated Decay (NMD) independent of the Exon Junction Complex (EJC)"/>
</dbReference>
<dbReference type="Reactome" id="R-BTA-975957">
    <property type="pathway name" value="Nonsense Mediated Decay (NMD) enhanced by the Exon Junction Complex (EJC)"/>
</dbReference>
<dbReference type="CD-CODE" id="D7FE2080">
    <property type="entry name" value="Nucleolus"/>
</dbReference>
<dbReference type="Proteomes" id="UP000009136">
    <property type="component" value="Chromosome 27"/>
</dbReference>
<dbReference type="Bgee" id="ENSBTAG00000033080">
    <property type="expression patterns" value="Expressed in occipital lobe and 104 other cell types or tissues"/>
</dbReference>
<dbReference type="GO" id="GO:0022625">
    <property type="term" value="C:cytosolic large ribosomal subunit"/>
    <property type="evidence" value="ECO:0000318"/>
    <property type="project" value="GO_Central"/>
</dbReference>
<dbReference type="GO" id="GO:0003723">
    <property type="term" value="F:RNA binding"/>
    <property type="evidence" value="ECO:0000318"/>
    <property type="project" value="GO_Central"/>
</dbReference>
<dbReference type="GO" id="GO:0003735">
    <property type="term" value="F:structural constituent of ribosome"/>
    <property type="evidence" value="ECO:0000318"/>
    <property type="project" value="GO_Central"/>
</dbReference>
<dbReference type="GO" id="GO:0002181">
    <property type="term" value="P:cytoplasmic translation"/>
    <property type="evidence" value="ECO:0000318"/>
    <property type="project" value="GO_Central"/>
</dbReference>
<dbReference type="FunFam" id="3.40.1120.10:FF:000001">
    <property type="entry name" value="Ribosomal protein L15"/>
    <property type="match status" value="1"/>
</dbReference>
<dbReference type="Gene3D" id="3.40.1120.10">
    <property type="entry name" value="Ribosomal protein l15e"/>
    <property type="match status" value="1"/>
</dbReference>
<dbReference type="InterPro" id="IPR024794">
    <property type="entry name" value="Rbsml_eL15_core_dom_sf"/>
</dbReference>
<dbReference type="InterPro" id="IPR000439">
    <property type="entry name" value="Ribosomal_eL15"/>
</dbReference>
<dbReference type="InterPro" id="IPR020925">
    <property type="entry name" value="Ribosomal_eL15_CS"/>
</dbReference>
<dbReference type="InterPro" id="IPR012678">
    <property type="entry name" value="Ribosomal_uL23/eL15/eS24_sf"/>
</dbReference>
<dbReference type="NCBIfam" id="NF003269">
    <property type="entry name" value="PRK04243.1"/>
    <property type="match status" value="1"/>
</dbReference>
<dbReference type="PANTHER" id="PTHR11847:SF4">
    <property type="entry name" value="LARGE RIBOSOMAL SUBUNIT PROTEIN EL15"/>
    <property type="match status" value="1"/>
</dbReference>
<dbReference type="PANTHER" id="PTHR11847">
    <property type="entry name" value="RIBOSOMAL PROTEIN L15"/>
    <property type="match status" value="1"/>
</dbReference>
<dbReference type="Pfam" id="PF00827">
    <property type="entry name" value="Ribosomal_L15e"/>
    <property type="match status" value="1"/>
</dbReference>
<dbReference type="SMART" id="SM01384">
    <property type="entry name" value="Ribosomal_L15e"/>
    <property type="match status" value="1"/>
</dbReference>
<dbReference type="SUPFAM" id="SSF54189">
    <property type="entry name" value="Ribosomal proteins S24e, L23 and L15e"/>
    <property type="match status" value="1"/>
</dbReference>
<dbReference type="PROSITE" id="PS01194">
    <property type="entry name" value="RIBOSOMAL_L15E"/>
    <property type="match status" value="1"/>
</dbReference>
<proteinExistence type="evidence at transcript level"/>
<keyword id="KW-0963">Cytoplasm</keyword>
<keyword id="KW-1017">Isopeptide bond</keyword>
<keyword id="KW-0449">Lipoprotein</keyword>
<keyword id="KW-0519">Myristate</keyword>
<keyword id="KW-0597">Phosphoprotein</keyword>
<keyword id="KW-1185">Reference proteome</keyword>
<keyword id="KW-0687">Ribonucleoprotein</keyword>
<keyword id="KW-0689">Ribosomal protein</keyword>
<keyword id="KW-0832">Ubl conjugation</keyword>
<comment type="function">
    <text evidence="1">Component of the large ribosomal subunit. The ribosome is a large ribonucleoprotein complex responsible for the synthesis of proteins in the cell.</text>
</comment>
<comment type="subunit">
    <text evidence="1">Component of the large ribosomal subunit. Interacts with IFIT1 (via TPR repeats 1-4).</text>
</comment>
<comment type="subcellular location">
    <subcellularLocation>
        <location evidence="1">Cytoplasm</location>
    </subcellularLocation>
</comment>
<comment type="similarity">
    <text evidence="4">Belongs to the eukaryotic ribosomal protein eL15 family.</text>
</comment>
<feature type="initiator methionine" description="Removed" evidence="1">
    <location>
        <position position="1"/>
    </location>
</feature>
<feature type="chain" id="PRO_0000240139" description="Large ribosomal subunit protein eL15">
    <location>
        <begin position="2"/>
        <end position="204"/>
    </location>
</feature>
<feature type="region of interest" description="Disordered" evidence="3">
    <location>
        <begin position="165"/>
        <end position="186"/>
    </location>
</feature>
<feature type="compositionally biased region" description="Basic residues" evidence="3">
    <location>
        <begin position="169"/>
        <end position="182"/>
    </location>
</feature>
<feature type="modified residue" description="Phosphoserine" evidence="2">
    <location>
        <position position="34"/>
    </location>
</feature>
<feature type="modified residue" description="Phosphoserine" evidence="1">
    <location>
        <position position="97"/>
    </location>
</feature>
<feature type="modified residue" description="Phosphoserine" evidence="1">
    <location>
        <position position="100"/>
    </location>
</feature>
<feature type="lipid moiety-binding region" description="N-myristoyl glycine" evidence="1">
    <location>
        <position position="2"/>
    </location>
</feature>
<feature type="cross-link" description="Glycyl lysine isopeptide (Lys-Gly) (interchain with G-Cter in SUMO2)" evidence="1">
    <location>
        <position position="83"/>
    </location>
</feature>
<feature type="sequence conflict" description="In Ref. 1; AAX08723." evidence="4" ref="1">
    <original>F</original>
    <variation>L</variation>
    <location>
        <position position="94"/>
    </location>
</feature>
<organism>
    <name type="scientific">Bos taurus</name>
    <name type="common">Bovine</name>
    <dbReference type="NCBI Taxonomy" id="9913"/>
    <lineage>
        <taxon>Eukaryota</taxon>
        <taxon>Metazoa</taxon>
        <taxon>Chordata</taxon>
        <taxon>Craniata</taxon>
        <taxon>Vertebrata</taxon>
        <taxon>Euteleostomi</taxon>
        <taxon>Mammalia</taxon>
        <taxon>Eutheria</taxon>
        <taxon>Laurasiatheria</taxon>
        <taxon>Artiodactyla</taxon>
        <taxon>Ruminantia</taxon>
        <taxon>Pecora</taxon>
        <taxon>Bovidae</taxon>
        <taxon>Bovinae</taxon>
        <taxon>Bos</taxon>
    </lineage>
</organism>
<name>RL15_BOVIN</name>